<sequence length="641" mass="70195">MLRASILRARPAVRPLARAARPQWHVAQRFYVDDKKNLGETAVPNPAPTTQPSSSPSNPTPVQENTIPASEVPKGPPAPDSTIGASRDAPTTQPSTTPPTGTGTASVAPDPIKPLPKKKRRRFRRFLLWLTILSGLGYAGGVWYSLVSDNFHDFFTEYIPYGEDAVAYFEEREFRRRFPGRAGEPRLHPQISGENKVTIPGRSGLTARPAKENSSDLASRGPHVSAVDDNKKQDKTESGGQQPKVSSQTPVAKEQPVQATETASSKAITPLDHLNVPSATEPVVQDVVKIVNDIITVVNADNAHDGKYNSALDKAKSELTKVVSDINAMKETLEQQAEAKVKAAHAEFDQAAKELIQRLDHQMQAQETQFKEEFENERERLSQSYKERLQSELQAAQKVYEQSLKNRLLEQSIKMQKSFTATVRERVEAEREGRLGKLNELSSSVHELEKLTAEWNSVVDANLKTQHLVVAVEAVKSALETQVVPKPFVTELAALKEIAADDPVVSAAIASINPAAYQRGIPSSALLIDRFRRVAGEVRKAALLPEDAGMASHLASLAMSKVLFKKSGLAVGADVEAVLARTEVLLEEGDLDAAAREMNGLQGWAKVLSKDWLSECRRVLEVKQALDVIATEARLNSLLID</sequence>
<reference key="1">
    <citation type="journal article" date="2013" name="G3 (Bethesda)">
        <title>Comparative genomics of a plant-pathogenic fungus, Pyrenophora tritici-repentis, reveals transduplication and the impact of repeat elements on pathogenicity and population divergence.</title>
        <authorList>
            <person name="Manning V.A."/>
            <person name="Pandelova I."/>
            <person name="Dhillon B."/>
            <person name="Wilhelm L.J."/>
            <person name="Goodwin S.B."/>
            <person name="Berlin A.M."/>
            <person name="Figueroa M."/>
            <person name="Freitag M."/>
            <person name="Hane J.K."/>
            <person name="Henrissat B."/>
            <person name="Holman W.H."/>
            <person name="Kodira C.D."/>
            <person name="Martin J."/>
            <person name="Oliver R.P."/>
            <person name="Robbertse B."/>
            <person name="Schackwitz W."/>
            <person name="Schwartz D.C."/>
            <person name="Spatafora J.W."/>
            <person name="Turgeon B.G."/>
            <person name="Yandava C."/>
            <person name="Young S."/>
            <person name="Zhou S."/>
            <person name="Zeng Q."/>
            <person name="Grigoriev I.V."/>
            <person name="Ma L.-J."/>
            <person name="Ciuffetti L.M."/>
        </authorList>
    </citation>
    <scope>NUCLEOTIDE SEQUENCE [LARGE SCALE GENOMIC DNA]</scope>
    <source>
        <strain>Pt-1C-BFP</strain>
    </source>
</reference>
<dbReference type="EMBL" id="DS231621">
    <property type="protein sequence ID" value="EDU49988.1"/>
    <property type="molecule type" value="Genomic_DNA"/>
</dbReference>
<dbReference type="RefSeq" id="XP_001937401.1">
    <property type="nucleotide sequence ID" value="XM_001937366.1"/>
</dbReference>
<dbReference type="SMR" id="B2WBQ6"/>
<dbReference type="FunCoup" id="B2WBQ6">
    <property type="interactions" value="168"/>
</dbReference>
<dbReference type="STRING" id="426418.B2WBQ6"/>
<dbReference type="EnsemblFungi" id="EDU49988">
    <property type="protein sequence ID" value="EDU49988"/>
    <property type="gene ID" value="PTRG_07069"/>
</dbReference>
<dbReference type="GeneID" id="6345340"/>
<dbReference type="KEGG" id="ptrr:6345340"/>
<dbReference type="eggNOG" id="KOG1854">
    <property type="taxonomic scope" value="Eukaryota"/>
</dbReference>
<dbReference type="HOGENOM" id="CLU_008024_1_2_1"/>
<dbReference type="InParanoid" id="B2WBQ6"/>
<dbReference type="OMA" id="RLDHQMQ"/>
<dbReference type="OrthoDB" id="32449at28556"/>
<dbReference type="Proteomes" id="UP000001471">
    <property type="component" value="Unassembled WGS sequence"/>
</dbReference>
<dbReference type="GO" id="GO:0061617">
    <property type="term" value="C:MICOS complex"/>
    <property type="evidence" value="ECO:0007669"/>
    <property type="project" value="TreeGrafter"/>
</dbReference>
<dbReference type="GO" id="GO:0042407">
    <property type="term" value="P:cristae formation"/>
    <property type="evidence" value="ECO:0007669"/>
    <property type="project" value="TreeGrafter"/>
</dbReference>
<dbReference type="InterPro" id="IPR019133">
    <property type="entry name" value="MIC60"/>
</dbReference>
<dbReference type="PANTHER" id="PTHR15415:SF7">
    <property type="entry name" value="MICOS COMPLEX SUBUNIT MIC60"/>
    <property type="match status" value="1"/>
</dbReference>
<dbReference type="PANTHER" id="PTHR15415">
    <property type="entry name" value="MITOFILIN"/>
    <property type="match status" value="1"/>
</dbReference>
<dbReference type="Pfam" id="PF09731">
    <property type="entry name" value="Mitofilin"/>
    <property type="match status" value="2"/>
</dbReference>
<keyword id="KW-0175">Coiled coil</keyword>
<keyword id="KW-0472">Membrane</keyword>
<keyword id="KW-0496">Mitochondrion</keyword>
<keyword id="KW-0999">Mitochondrion inner membrane</keyword>
<keyword id="KW-1185">Reference proteome</keyword>
<keyword id="KW-0809">Transit peptide</keyword>
<keyword id="KW-0812">Transmembrane</keyword>
<keyword id="KW-1133">Transmembrane helix</keyword>
<accession>B2WBQ6</accession>
<comment type="function">
    <text evidence="1">Component of the MICOS complex, a large protein complex of the mitochondrial inner membrane that plays crucial roles in the maintenance of crista junctions, inner membrane architecture, and formation of contact sites to the outer membrane. Plays a role in keeping cristae membranes connected to the inner boundary membrane. Also promotes protein import via the mitochondrial intermembrane space assembly (MIA) pathway (By similarity).</text>
</comment>
<comment type="subunit">
    <text evidence="1">Component of the mitochondrial contact site and cristae organizing system (MICOS) complex.</text>
</comment>
<comment type="subcellular location">
    <subcellularLocation>
        <location evidence="1">Mitochondrion inner membrane</location>
        <topology evidence="1">Single-pass membrane protein</topology>
    </subcellularLocation>
</comment>
<comment type="similarity">
    <text evidence="4">Belongs to the MICOS complex subunit Mic60 family.</text>
</comment>
<name>MIC60_PYRTR</name>
<protein>
    <recommendedName>
        <fullName>MICOS complex subunit MIC60</fullName>
    </recommendedName>
    <alternativeName>
        <fullName>Mitofilin</fullName>
    </alternativeName>
</protein>
<gene>
    <name type="primary">MIC60</name>
    <name type="ORF">PTRG_07069</name>
</gene>
<proteinExistence type="inferred from homology"/>
<evidence type="ECO:0000250" key="1"/>
<evidence type="ECO:0000255" key="2"/>
<evidence type="ECO:0000256" key="3">
    <source>
        <dbReference type="SAM" id="MobiDB-lite"/>
    </source>
</evidence>
<evidence type="ECO:0000305" key="4"/>
<organism>
    <name type="scientific">Pyrenophora tritici-repentis (strain Pt-1C-BFP)</name>
    <name type="common">Wheat tan spot fungus</name>
    <name type="synonym">Drechslera tritici-repentis</name>
    <dbReference type="NCBI Taxonomy" id="426418"/>
    <lineage>
        <taxon>Eukaryota</taxon>
        <taxon>Fungi</taxon>
        <taxon>Dikarya</taxon>
        <taxon>Ascomycota</taxon>
        <taxon>Pezizomycotina</taxon>
        <taxon>Dothideomycetes</taxon>
        <taxon>Pleosporomycetidae</taxon>
        <taxon>Pleosporales</taxon>
        <taxon>Pleosporineae</taxon>
        <taxon>Pleosporaceae</taxon>
        <taxon>Pyrenophora</taxon>
    </lineage>
</organism>
<feature type="transit peptide" description="Mitochondrion" evidence="2">
    <location>
        <begin position="1"/>
        <end position="16"/>
    </location>
</feature>
<feature type="chain" id="PRO_0000406672" description="MICOS complex subunit MIC60">
    <location>
        <begin position="17"/>
        <end position="641"/>
    </location>
</feature>
<feature type="topological domain" description="Mitochondrial matrix" evidence="2">
    <location>
        <begin position="17"/>
        <end position="125"/>
    </location>
</feature>
<feature type="transmembrane region" description="Helical" evidence="2">
    <location>
        <begin position="126"/>
        <end position="146"/>
    </location>
</feature>
<feature type="topological domain" description="Mitochondrial intermembrane" evidence="2">
    <location>
        <begin position="147"/>
        <end position="641"/>
    </location>
</feature>
<feature type="region of interest" description="Disordered" evidence="3">
    <location>
        <begin position="35"/>
        <end position="115"/>
    </location>
</feature>
<feature type="region of interest" description="Disordered" evidence="3">
    <location>
        <begin position="180"/>
        <end position="266"/>
    </location>
</feature>
<feature type="coiled-coil region" evidence="2">
    <location>
        <begin position="311"/>
        <end position="408"/>
    </location>
</feature>
<feature type="compositionally biased region" description="Low complexity" evidence="3">
    <location>
        <begin position="48"/>
        <end position="61"/>
    </location>
</feature>
<feature type="compositionally biased region" description="Low complexity" evidence="3">
    <location>
        <begin position="89"/>
        <end position="106"/>
    </location>
</feature>
<feature type="compositionally biased region" description="Basic and acidic residues" evidence="3">
    <location>
        <begin position="226"/>
        <end position="237"/>
    </location>
</feature>
<feature type="compositionally biased region" description="Polar residues" evidence="3">
    <location>
        <begin position="238"/>
        <end position="250"/>
    </location>
</feature>
<feature type="compositionally biased region" description="Polar residues" evidence="3">
    <location>
        <begin position="257"/>
        <end position="266"/>
    </location>
</feature>